<gene>
    <name type="primary">yajC</name>
    <name type="ordered locus">BQ2027_MB2619C</name>
</gene>
<sequence>MESFVLFLPFLLIMGGFMYFASRRQRRAMQATIDLHDSLQPGERVHTTSGLEATIVAIADDTIDLEIAPGVVTTWMKLAIRDRILPDDDIDEELNEDLDKDVDDVAGERRVTNDS</sequence>
<accession>P65026</accession>
<accession>A0A1R3Y1W0</accession>
<accession>Q50633</accession>
<accession>X2BLD3</accession>
<name>YAJC_MYCBO</name>
<organism>
    <name type="scientific">Mycobacterium bovis (strain ATCC BAA-935 / AF2122/97)</name>
    <dbReference type="NCBI Taxonomy" id="233413"/>
    <lineage>
        <taxon>Bacteria</taxon>
        <taxon>Bacillati</taxon>
        <taxon>Actinomycetota</taxon>
        <taxon>Actinomycetes</taxon>
        <taxon>Mycobacteriales</taxon>
        <taxon>Mycobacteriaceae</taxon>
        <taxon>Mycobacterium</taxon>
        <taxon>Mycobacterium tuberculosis complex</taxon>
    </lineage>
</organism>
<evidence type="ECO:0000250" key="1">
    <source>
        <dbReference type="UniProtKB" id="P0ADZ7"/>
    </source>
</evidence>
<evidence type="ECO:0000255" key="2"/>
<evidence type="ECO:0000256" key="3">
    <source>
        <dbReference type="SAM" id="MobiDB-lite"/>
    </source>
</evidence>
<evidence type="ECO:0000305" key="4"/>
<dbReference type="EMBL" id="LT708304">
    <property type="protein sequence ID" value="SIU01237.1"/>
    <property type="molecule type" value="Genomic_DNA"/>
</dbReference>
<dbReference type="RefSeq" id="NP_856265.1">
    <property type="nucleotide sequence ID" value="NC_002945.3"/>
</dbReference>
<dbReference type="RefSeq" id="WP_003413391.1">
    <property type="nucleotide sequence ID" value="NC_002945.4"/>
</dbReference>
<dbReference type="SMR" id="P65026"/>
<dbReference type="GeneID" id="45426590"/>
<dbReference type="KEGG" id="mbo:BQ2027_MB2619C"/>
<dbReference type="PATRIC" id="fig|233413.5.peg.2880"/>
<dbReference type="Proteomes" id="UP000001419">
    <property type="component" value="Chromosome"/>
</dbReference>
<dbReference type="GO" id="GO:0005886">
    <property type="term" value="C:plasma membrane"/>
    <property type="evidence" value="ECO:0007669"/>
    <property type="project" value="UniProtKB-SubCell"/>
</dbReference>
<dbReference type="GO" id="GO:0015031">
    <property type="term" value="P:protein transport"/>
    <property type="evidence" value="ECO:0007669"/>
    <property type="project" value="UniProtKB-KW"/>
</dbReference>
<dbReference type="InterPro" id="IPR003849">
    <property type="entry name" value="Preprotein_translocase_YajC"/>
</dbReference>
<dbReference type="NCBIfam" id="TIGR00739">
    <property type="entry name" value="yajC"/>
    <property type="match status" value="1"/>
</dbReference>
<dbReference type="PANTHER" id="PTHR33909">
    <property type="entry name" value="SEC TRANSLOCON ACCESSORY COMPLEX SUBUNIT YAJC"/>
    <property type="match status" value="1"/>
</dbReference>
<dbReference type="PANTHER" id="PTHR33909:SF1">
    <property type="entry name" value="SEC TRANSLOCON ACCESSORY COMPLEX SUBUNIT YAJC"/>
    <property type="match status" value="1"/>
</dbReference>
<dbReference type="Pfam" id="PF02699">
    <property type="entry name" value="YajC"/>
    <property type="match status" value="1"/>
</dbReference>
<dbReference type="SMART" id="SM01323">
    <property type="entry name" value="YajC"/>
    <property type="match status" value="1"/>
</dbReference>
<proteinExistence type="inferred from homology"/>
<protein>
    <recommendedName>
        <fullName>Sec translocon accessory complex subunit YajC</fullName>
    </recommendedName>
</protein>
<keyword id="KW-1003">Cell membrane</keyword>
<keyword id="KW-0472">Membrane</keyword>
<keyword id="KW-0653">Protein transport</keyword>
<keyword id="KW-1185">Reference proteome</keyword>
<keyword id="KW-0811">Translocation</keyword>
<keyword id="KW-0812">Transmembrane</keyword>
<keyword id="KW-1133">Transmembrane helix</keyword>
<keyword id="KW-0813">Transport</keyword>
<reference key="1">
    <citation type="journal article" date="2003" name="Proc. Natl. Acad. Sci. U.S.A.">
        <title>The complete genome sequence of Mycobacterium bovis.</title>
        <authorList>
            <person name="Garnier T."/>
            <person name="Eiglmeier K."/>
            <person name="Camus J.-C."/>
            <person name="Medina N."/>
            <person name="Mansoor H."/>
            <person name="Pryor M."/>
            <person name="Duthoy S."/>
            <person name="Grondin S."/>
            <person name="Lacroix C."/>
            <person name="Monsempe C."/>
            <person name="Simon S."/>
            <person name="Harris B."/>
            <person name="Atkin R."/>
            <person name="Doggett J."/>
            <person name="Mayes R."/>
            <person name="Keating L."/>
            <person name="Wheeler P.R."/>
            <person name="Parkhill J."/>
            <person name="Barrell B.G."/>
            <person name="Cole S.T."/>
            <person name="Gordon S.V."/>
            <person name="Hewinson R.G."/>
        </authorList>
    </citation>
    <scope>NUCLEOTIDE SEQUENCE [LARGE SCALE GENOMIC DNA]</scope>
    <source>
        <strain>ATCC BAA-935 / AF2122/97</strain>
    </source>
</reference>
<reference key="2">
    <citation type="journal article" date="2017" name="Genome Announc.">
        <title>Updated reference genome sequence and annotation of Mycobacterium bovis AF2122/97.</title>
        <authorList>
            <person name="Malone K.M."/>
            <person name="Farrell D."/>
            <person name="Stuber T.P."/>
            <person name="Schubert O.T."/>
            <person name="Aebersold R."/>
            <person name="Robbe-Austerman S."/>
            <person name="Gordon S.V."/>
        </authorList>
    </citation>
    <scope>NUCLEOTIDE SEQUENCE [LARGE SCALE GENOMIC DNA]</scope>
    <scope>GENOME REANNOTATION</scope>
    <source>
        <strain>ATCC BAA-935 / AF2122/97</strain>
    </source>
</reference>
<feature type="chain" id="PRO_0000014140" description="Sec translocon accessory complex subunit YajC">
    <location>
        <begin position="1"/>
        <end position="115"/>
    </location>
</feature>
<feature type="transmembrane region" description="Helical" evidence="2">
    <location>
        <begin position="1"/>
        <end position="21"/>
    </location>
</feature>
<feature type="region of interest" description="Disordered" evidence="3">
    <location>
        <begin position="96"/>
        <end position="115"/>
    </location>
</feature>
<feature type="compositionally biased region" description="Acidic residues" evidence="3">
    <location>
        <begin position="96"/>
        <end position="105"/>
    </location>
</feature>
<feature type="compositionally biased region" description="Basic and acidic residues" evidence="3">
    <location>
        <begin position="106"/>
        <end position="115"/>
    </location>
</feature>
<comment type="function">
    <text evidence="1">The SecYEG-SecDF-YajC-YidC holo-translocon (HTL) protein secretase/insertase is a supercomplex required for protein secretion, insertion of proteins into membranes, and assembly of membrane protein complexes. While the SecYEG complex is essential for assembly of a number of proteins and complexes, the SecDF-YajC-YidC subcomplex facilitates these functions.</text>
</comment>
<comment type="subunit">
    <text evidence="1">Part of the SecDF-YidC-YajC translocase complex. The SecDF-YidC-YajC translocase forms a supercomplex with SecYEG, called the holo-translocon (HTL).</text>
</comment>
<comment type="subcellular location">
    <subcellularLocation>
        <location evidence="2">Cell membrane</location>
        <topology evidence="2">Single-pass membrane protein</topology>
    </subcellularLocation>
</comment>
<comment type="similarity">
    <text evidence="4">Belongs to the YajC family.</text>
</comment>